<keyword id="KW-1003">Cell membrane</keyword>
<keyword id="KW-0378">Hydrolase</keyword>
<keyword id="KW-0472">Membrane</keyword>
<keyword id="KW-0645">Protease</keyword>
<keyword id="KW-0812">Transmembrane</keyword>
<keyword id="KW-1133">Transmembrane helix</keyword>
<sequence length="312" mass="37103">MRNILTIFLLTSTFFTGILWIIDHILLIKNYFYNKKKTKNNNTILINKVILENKKCFFRSLSSLFPTFFIVFIIRSFIYEPFQIPSGSMMPTLLIGDFILVKKFSYGIKEPITNKTIIKMNLPQRGDIVVFKHPKNNIDYIKRVVGLPGDKIQYDINRKKIKICINYTNQKNCENKLFITYSKPKLSNFFQKIYLLKSRTNEEEKVYNSIYFKKVEEKINNLKHNILILDGINSKINDYYQQKGMPKLIWIVPKNKYFMMGDNRDNSLDSRYWGFVPEENLLGKATKIWMSFEKKENEWPTGIRIKRIGNIY</sequence>
<gene>
    <name type="primary">lepB</name>
    <name type="ordered locus">BUsg_250</name>
</gene>
<comment type="catalytic activity">
    <reaction>
        <text>Cleavage of hydrophobic, N-terminal signal or leader sequences from secreted and periplasmic proteins.</text>
        <dbReference type="EC" id="3.4.21.89"/>
    </reaction>
</comment>
<comment type="subcellular location">
    <subcellularLocation>
        <location evidence="1">Cell membrane</location>
        <topology evidence="1">Multi-pass membrane protein</topology>
    </subcellularLocation>
</comment>
<comment type="similarity">
    <text evidence="3">Belongs to the peptidase S26 family.</text>
</comment>
<feature type="chain" id="PRO_0000109504" description="Signal peptidase I">
    <location>
        <begin position="1"/>
        <end position="312"/>
    </location>
</feature>
<feature type="transmembrane region" description="Helical" evidence="2">
    <location>
        <begin position="7"/>
        <end position="27"/>
    </location>
</feature>
<feature type="topological domain" description="Cytoplasmic" evidence="2">
    <location>
        <begin position="28"/>
        <end position="63"/>
    </location>
</feature>
<feature type="transmembrane region" description="Helical" evidence="2">
    <location>
        <begin position="64"/>
        <end position="84"/>
    </location>
</feature>
<feature type="topological domain" description="Extracellular" evidence="2">
    <location>
        <begin position="85"/>
        <end position="312"/>
    </location>
</feature>
<feature type="active site" evidence="1">
    <location>
        <position position="88"/>
    </location>
</feature>
<feature type="active site" evidence="1">
    <location>
        <position position="142"/>
    </location>
</feature>
<dbReference type="EC" id="3.4.21.89"/>
<dbReference type="EMBL" id="AE013218">
    <property type="protein sequence ID" value="AAM67809.1"/>
    <property type="molecule type" value="Genomic_DNA"/>
</dbReference>
<dbReference type="RefSeq" id="WP_011053776.1">
    <property type="nucleotide sequence ID" value="NC_004061.1"/>
</dbReference>
<dbReference type="SMR" id="Q8K9R0"/>
<dbReference type="STRING" id="198804.BUsg_250"/>
<dbReference type="MEROPS" id="S26.001"/>
<dbReference type="GeneID" id="93003720"/>
<dbReference type="KEGG" id="bas:BUsg_250"/>
<dbReference type="eggNOG" id="COG0681">
    <property type="taxonomic scope" value="Bacteria"/>
</dbReference>
<dbReference type="HOGENOM" id="CLU_028723_1_1_6"/>
<dbReference type="Proteomes" id="UP000000416">
    <property type="component" value="Chromosome"/>
</dbReference>
<dbReference type="GO" id="GO:0005886">
    <property type="term" value="C:plasma membrane"/>
    <property type="evidence" value="ECO:0007669"/>
    <property type="project" value="UniProtKB-SubCell"/>
</dbReference>
<dbReference type="GO" id="GO:0004252">
    <property type="term" value="F:serine-type endopeptidase activity"/>
    <property type="evidence" value="ECO:0007669"/>
    <property type="project" value="UniProtKB-EC"/>
</dbReference>
<dbReference type="GO" id="GO:0006465">
    <property type="term" value="P:signal peptide processing"/>
    <property type="evidence" value="ECO:0007669"/>
    <property type="project" value="InterPro"/>
</dbReference>
<dbReference type="CDD" id="cd06530">
    <property type="entry name" value="S26_SPase_I"/>
    <property type="match status" value="1"/>
</dbReference>
<dbReference type="Gene3D" id="2.170.230.10">
    <property type="match status" value="1"/>
</dbReference>
<dbReference type="Gene3D" id="2.10.109.10">
    <property type="entry name" value="Umud Fragment, subunit A"/>
    <property type="match status" value="1"/>
</dbReference>
<dbReference type="InterPro" id="IPR036286">
    <property type="entry name" value="LexA/Signal_pep-like_sf"/>
</dbReference>
<dbReference type="InterPro" id="IPR000223">
    <property type="entry name" value="Pept_S26A_signal_pept_1"/>
</dbReference>
<dbReference type="InterPro" id="IPR019758">
    <property type="entry name" value="Pept_S26A_signal_pept_1_CS"/>
</dbReference>
<dbReference type="InterPro" id="IPR019757">
    <property type="entry name" value="Pept_S26A_signal_pept_1_Lys-AS"/>
</dbReference>
<dbReference type="InterPro" id="IPR019756">
    <property type="entry name" value="Pept_S26A_signal_pept_1_Ser-AS"/>
</dbReference>
<dbReference type="InterPro" id="IPR019533">
    <property type="entry name" value="Peptidase_S26"/>
</dbReference>
<dbReference type="InterPro" id="IPR019766">
    <property type="entry name" value="Sign_pep_all-beta_subdom"/>
</dbReference>
<dbReference type="NCBIfam" id="NF008114">
    <property type="entry name" value="PRK10861.1"/>
    <property type="match status" value="1"/>
</dbReference>
<dbReference type="NCBIfam" id="TIGR02227">
    <property type="entry name" value="sigpep_I_bact"/>
    <property type="match status" value="1"/>
</dbReference>
<dbReference type="PANTHER" id="PTHR43390:SF1">
    <property type="entry name" value="CHLOROPLAST PROCESSING PEPTIDASE"/>
    <property type="match status" value="1"/>
</dbReference>
<dbReference type="PANTHER" id="PTHR43390">
    <property type="entry name" value="SIGNAL PEPTIDASE I"/>
    <property type="match status" value="1"/>
</dbReference>
<dbReference type="Pfam" id="PF10502">
    <property type="entry name" value="Peptidase_S26"/>
    <property type="match status" value="1"/>
</dbReference>
<dbReference type="PRINTS" id="PR00727">
    <property type="entry name" value="LEADERPTASE"/>
</dbReference>
<dbReference type="SUPFAM" id="SSF51306">
    <property type="entry name" value="LexA/Signal peptidase"/>
    <property type="match status" value="1"/>
</dbReference>
<dbReference type="PROSITE" id="PS00501">
    <property type="entry name" value="SPASE_I_1"/>
    <property type="match status" value="1"/>
</dbReference>
<dbReference type="PROSITE" id="PS00760">
    <property type="entry name" value="SPASE_I_2"/>
    <property type="match status" value="1"/>
</dbReference>
<dbReference type="PROSITE" id="PS00761">
    <property type="entry name" value="SPASE_I_3"/>
    <property type="match status" value="1"/>
</dbReference>
<accession>Q8K9R0</accession>
<protein>
    <recommendedName>
        <fullName>Signal peptidase I</fullName>
        <shortName>SPase I</shortName>
        <ecNumber>3.4.21.89</ecNumber>
    </recommendedName>
    <alternativeName>
        <fullName>Leader peptidase I</fullName>
    </alternativeName>
</protein>
<organism>
    <name type="scientific">Buchnera aphidicola subsp. Schizaphis graminum (strain Sg)</name>
    <dbReference type="NCBI Taxonomy" id="198804"/>
    <lineage>
        <taxon>Bacteria</taxon>
        <taxon>Pseudomonadati</taxon>
        <taxon>Pseudomonadota</taxon>
        <taxon>Gammaproteobacteria</taxon>
        <taxon>Enterobacterales</taxon>
        <taxon>Erwiniaceae</taxon>
        <taxon>Buchnera</taxon>
    </lineage>
</organism>
<name>LEP_BUCAP</name>
<proteinExistence type="inferred from homology"/>
<reference key="1">
    <citation type="journal article" date="2002" name="Science">
        <title>50 million years of genomic stasis in endosymbiotic bacteria.</title>
        <authorList>
            <person name="Tamas I."/>
            <person name="Klasson L."/>
            <person name="Canbaeck B."/>
            <person name="Naeslund A.K."/>
            <person name="Eriksson A.-S."/>
            <person name="Wernegreen J.J."/>
            <person name="Sandstroem J.P."/>
            <person name="Moran N.A."/>
            <person name="Andersson S.G.E."/>
        </authorList>
    </citation>
    <scope>NUCLEOTIDE SEQUENCE [LARGE SCALE GENOMIC DNA]</scope>
    <source>
        <strain>Sg</strain>
    </source>
</reference>
<evidence type="ECO:0000250" key="1"/>
<evidence type="ECO:0000255" key="2"/>
<evidence type="ECO:0000305" key="3"/>